<dbReference type="EMBL" id="CP001657">
    <property type="protein sequence ID" value="ACT12266.1"/>
    <property type="molecule type" value="Genomic_DNA"/>
</dbReference>
<dbReference type="RefSeq" id="WP_015839498.1">
    <property type="nucleotide sequence ID" value="NC_012917.1"/>
</dbReference>
<dbReference type="SMR" id="C6DCB6"/>
<dbReference type="STRING" id="561230.PC1_1218"/>
<dbReference type="KEGG" id="pct:PC1_1218"/>
<dbReference type="eggNOG" id="COG2060">
    <property type="taxonomic scope" value="Bacteria"/>
</dbReference>
<dbReference type="HOGENOM" id="CLU_018614_3_0_6"/>
<dbReference type="OrthoDB" id="9763796at2"/>
<dbReference type="Proteomes" id="UP000002736">
    <property type="component" value="Chromosome"/>
</dbReference>
<dbReference type="GO" id="GO:0005886">
    <property type="term" value="C:plasma membrane"/>
    <property type="evidence" value="ECO:0007669"/>
    <property type="project" value="UniProtKB-SubCell"/>
</dbReference>
<dbReference type="GO" id="GO:0008556">
    <property type="term" value="F:P-type potassium transmembrane transporter activity"/>
    <property type="evidence" value="ECO:0007669"/>
    <property type="project" value="InterPro"/>
</dbReference>
<dbReference type="GO" id="GO:0030955">
    <property type="term" value="F:potassium ion binding"/>
    <property type="evidence" value="ECO:0007669"/>
    <property type="project" value="UniProtKB-UniRule"/>
</dbReference>
<dbReference type="HAMAP" id="MF_00275">
    <property type="entry name" value="KdpA"/>
    <property type="match status" value="1"/>
</dbReference>
<dbReference type="InterPro" id="IPR004623">
    <property type="entry name" value="KdpA"/>
</dbReference>
<dbReference type="NCBIfam" id="TIGR00680">
    <property type="entry name" value="kdpA"/>
    <property type="match status" value="1"/>
</dbReference>
<dbReference type="PANTHER" id="PTHR30607">
    <property type="entry name" value="POTASSIUM-TRANSPORTING ATPASE A CHAIN"/>
    <property type="match status" value="1"/>
</dbReference>
<dbReference type="PANTHER" id="PTHR30607:SF2">
    <property type="entry name" value="POTASSIUM-TRANSPORTING ATPASE POTASSIUM-BINDING SUBUNIT"/>
    <property type="match status" value="1"/>
</dbReference>
<dbReference type="Pfam" id="PF03814">
    <property type="entry name" value="KdpA"/>
    <property type="match status" value="1"/>
</dbReference>
<dbReference type="PIRSF" id="PIRSF001294">
    <property type="entry name" value="K_ATPaseA"/>
    <property type="match status" value="1"/>
</dbReference>
<feature type="chain" id="PRO_1000204787" description="Potassium-transporting ATPase potassium-binding subunit">
    <location>
        <begin position="1"/>
        <end position="562"/>
    </location>
</feature>
<feature type="transmembrane region" description="Helical" evidence="1">
    <location>
        <begin position="5"/>
        <end position="25"/>
    </location>
</feature>
<feature type="transmembrane region" description="Helical" evidence="1">
    <location>
        <begin position="63"/>
        <end position="83"/>
    </location>
</feature>
<feature type="transmembrane region" description="Helical" evidence="1">
    <location>
        <begin position="132"/>
        <end position="152"/>
    </location>
</feature>
<feature type="transmembrane region" description="Helical" evidence="1">
    <location>
        <begin position="175"/>
        <end position="195"/>
    </location>
</feature>
<feature type="transmembrane region" description="Helical" evidence="1">
    <location>
        <begin position="250"/>
        <end position="270"/>
    </location>
</feature>
<feature type="transmembrane region" description="Helical" evidence="1">
    <location>
        <begin position="279"/>
        <end position="299"/>
    </location>
</feature>
<feature type="transmembrane region" description="Helical" evidence="1">
    <location>
        <begin position="327"/>
        <end position="347"/>
    </location>
</feature>
<feature type="transmembrane region" description="Helical" evidence="1">
    <location>
        <begin position="356"/>
        <end position="376"/>
    </location>
</feature>
<feature type="transmembrane region" description="Helical" evidence="1">
    <location>
        <begin position="379"/>
        <end position="399"/>
    </location>
</feature>
<feature type="transmembrane region" description="Helical" evidence="1">
    <location>
        <begin position="416"/>
        <end position="436"/>
    </location>
</feature>
<feature type="transmembrane region" description="Helical" evidence="1">
    <location>
        <begin position="483"/>
        <end position="503"/>
    </location>
</feature>
<feature type="transmembrane region" description="Helical" evidence="1">
    <location>
        <begin position="526"/>
        <end position="546"/>
    </location>
</feature>
<comment type="function">
    <text evidence="1">Part of the high-affinity ATP-driven potassium transport (or Kdp) system, which catalyzes the hydrolysis of ATP coupled with the electrogenic transport of potassium into the cytoplasm. This subunit binds the periplasmic potassium ions and delivers the ions to the membrane domain of KdpB through an intramembrane tunnel.</text>
</comment>
<comment type="subunit">
    <text evidence="1">The system is composed of three essential subunits: KdpA, KdpB and KdpC.</text>
</comment>
<comment type="subcellular location">
    <subcellularLocation>
        <location evidence="1">Cell inner membrane</location>
        <topology evidence="1">Multi-pass membrane protein</topology>
    </subcellularLocation>
</comment>
<comment type="similarity">
    <text evidence="1">Belongs to the KdpA family.</text>
</comment>
<sequence>MAADAFLLIFGLLLTVLIVAQPLGSGLARLIEGETGTLLQKFEAGTARLFALDTTEMRWQQYAAAILTLNLIGIVVLFVLLMAQGVLPLNPENMPGLSWHLALNTAISFVTNTNWQAYSGENTLSYLSQMVGLTVQNFLAAASGIAVAFALIRAFSRRCVDTLGNAWLDLFRITLYVLLPLSLLLALFFVSQGVLQNLLPYQHLTTLDGAAQTLPMGPVASQEAIKLLGTNGGGFFGANSAHPFENPTALSNIVQMLAILLIPTALCFAFGKAVSDNRQGHALLWAMGLIFIVAAAVVMKMEVIGNPHLLALGADSAANLEGKETRFGVLTSSLYAVVTTATSTGAVNAMHDSFTALGGMVPMWLMQIGEVVFGGVGSGLYGMLLFVLLTVFIAGLMIGRSPEYLGKKIEVYEMKMTALAILIPPALVLLGTALALSTEAGRSGILNPGAHGFSEVLYAVSSAANNNGSAFAGLSVNTPFYNVLLAVAMLLGRFAVMVPVLAIAGSLVVKKRQPESKGSLSTRSPLFIGMLIAIVLLIGALTFIPALALGPVAEHLQFGLTH</sequence>
<gene>
    <name evidence="1" type="primary">kdpA</name>
    <name type="ordered locus">PC1_1218</name>
</gene>
<keyword id="KW-0997">Cell inner membrane</keyword>
<keyword id="KW-1003">Cell membrane</keyword>
<keyword id="KW-0406">Ion transport</keyword>
<keyword id="KW-0472">Membrane</keyword>
<keyword id="KW-0630">Potassium</keyword>
<keyword id="KW-0633">Potassium transport</keyword>
<keyword id="KW-0812">Transmembrane</keyword>
<keyword id="KW-1133">Transmembrane helix</keyword>
<keyword id="KW-0813">Transport</keyword>
<accession>C6DCB6</accession>
<organism>
    <name type="scientific">Pectobacterium carotovorum subsp. carotovorum (strain PC1)</name>
    <dbReference type="NCBI Taxonomy" id="561230"/>
    <lineage>
        <taxon>Bacteria</taxon>
        <taxon>Pseudomonadati</taxon>
        <taxon>Pseudomonadota</taxon>
        <taxon>Gammaproteobacteria</taxon>
        <taxon>Enterobacterales</taxon>
        <taxon>Pectobacteriaceae</taxon>
        <taxon>Pectobacterium</taxon>
    </lineage>
</organism>
<proteinExistence type="inferred from homology"/>
<name>KDPA_PECCP</name>
<protein>
    <recommendedName>
        <fullName evidence="1">Potassium-transporting ATPase potassium-binding subunit</fullName>
    </recommendedName>
    <alternativeName>
        <fullName evidence="1">ATP phosphohydrolase [potassium-transporting] A chain</fullName>
    </alternativeName>
    <alternativeName>
        <fullName evidence="1">Potassium-binding and translocating subunit A</fullName>
    </alternativeName>
    <alternativeName>
        <fullName evidence="1">Potassium-translocating ATPase A chain</fullName>
    </alternativeName>
</protein>
<evidence type="ECO:0000255" key="1">
    <source>
        <dbReference type="HAMAP-Rule" id="MF_00275"/>
    </source>
</evidence>
<reference key="1">
    <citation type="submission" date="2009-07" db="EMBL/GenBank/DDBJ databases">
        <title>Complete sequence of Pectobacterium carotovorum subsp. carotovorum PC1.</title>
        <authorList>
            <consortium name="US DOE Joint Genome Institute"/>
            <person name="Lucas S."/>
            <person name="Copeland A."/>
            <person name="Lapidus A."/>
            <person name="Glavina del Rio T."/>
            <person name="Tice H."/>
            <person name="Bruce D."/>
            <person name="Goodwin L."/>
            <person name="Pitluck S."/>
            <person name="Munk A.C."/>
            <person name="Brettin T."/>
            <person name="Detter J.C."/>
            <person name="Han C."/>
            <person name="Tapia R."/>
            <person name="Larimer F."/>
            <person name="Land M."/>
            <person name="Hauser L."/>
            <person name="Kyrpides N."/>
            <person name="Mikhailova N."/>
            <person name="Balakrishnan V."/>
            <person name="Glasner J."/>
            <person name="Perna N.T."/>
        </authorList>
    </citation>
    <scope>NUCLEOTIDE SEQUENCE [LARGE SCALE GENOMIC DNA]</scope>
    <source>
        <strain>PC1</strain>
    </source>
</reference>